<comment type="function">
    <text evidence="1">One of the components of the core complex of photosystem II (PSII). PSII is a light-driven water:plastoquinone oxidoreductase that uses light energy to abstract electrons from H(2)O, generating O(2) and a proton gradient subsequently used for ATP formation. It consists of a core antenna complex that captures photons, and an electron transfer chain that converts photonic excitation into a charge separation.</text>
</comment>
<comment type="subunit">
    <text evidence="1">PSII is composed of 1 copy each of membrane proteins PsbA, PsbB, PsbC, PsbD, PsbE, PsbF, PsbH, PsbI, PsbJ, PsbK, PsbL, PsbM, PsbT, PsbX, PsbY, PsbZ, Psb30/Ycf12, at least 3 peripheral proteins of the oxygen-evolving complex and a large number of cofactors. It forms dimeric complexes.</text>
</comment>
<comment type="subcellular location">
    <subcellularLocation>
        <location evidence="1">Plastid</location>
        <location evidence="1">Chloroplast thylakoid membrane</location>
        <topology evidence="1">Single-pass membrane protein</topology>
    </subcellularLocation>
</comment>
<comment type="similarity">
    <text evidence="1">Belongs to the PsbJ family.</text>
</comment>
<dbReference type="EMBL" id="DQ887677">
    <property type="protein sequence ID" value="ABI14486.1"/>
    <property type="molecule type" value="Genomic_DNA"/>
</dbReference>
<dbReference type="RefSeq" id="YP_784487.1">
    <property type="nucleotide sequence ID" value="NC_008457.1"/>
</dbReference>
<dbReference type="SMR" id="Q06GP6"/>
<dbReference type="GeneID" id="4363670"/>
<dbReference type="GO" id="GO:0009535">
    <property type="term" value="C:chloroplast thylakoid membrane"/>
    <property type="evidence" value="ECO:0007669"/>
    <property type="project" value="UniProtKB-SubCell"/>
</dbReference>
<dbReference type="GO" id="GO:0009539">
    <property type="term" value="C:photosystem II reaction center"/>
    <property type="evidence" value="ECO:0007669"/>
    <property type="project" value="InterPro"/>
</dbReference>
<dbReference type="GO" id="GO:0015979">
    <property type="term" value="P:photosynthesis"/>
    <property type="evidence" value="ECO:0007669"/>
    <property type="project" value="UniProtKB-UniRule"/>
</dbReference>
<dbReference type="Gene3D" id="6.10.250.2070">
    <property type="match status" value="1"/>
</dbReference>
<dbReference type="HAMAP" id="MF_01305">
    <property type="entry name" value="PSII_PsbJ"/>
    <property type="match status" value="1"/>
</dbReference>
<dbReference type="InterPro" id="IPR002682">
    <property type="entry name" value="PSII_PsbJ"/>
</dbReference>
<dbReference type="InterPro" id="IPR037267">
    <property type="entry name" value="PSII_PsbJ_sf"/>
</dbReference>
<dbReference type="NCBIfam" id="NF002722">
    <property type="entry name" value="PRK02565.1"/>
    <property type="match status" value="1"/>
</dbReference>
<dbReference type="PANTHER" id="PTHR34812">
    <property type="entry name" value="PHOTOSYSTEM II REACTION CENTER PROTEIN J"/>
    <property type="match status" value="1"/>
</dbReference>
<dbReference type="PANTHER" id="PTHR34812:SF3">
    <property type="entry name" value="PHOTOSYSTEM II REACTION CENTER PROTEIN J"/>
    <property type="match status" value="1"/>
</dbReference>
<dbReference type="Pfam" id="PF01788">
    <property type="entry name" value="PsbJ"/>
    <property type="match status" value="1"/>
</dbReference>
<dbReference type="SUPFAM" id="SSF161021">
    <property type="entry name" value="Photosystem II reaction center protein J, PsbJ"/>
    <property type="match status" value="1"/>
</dbReference>
<proteinExistence type="inferred from homology"/>
<organism>
    <name type="scientific">Piper cenocladum</name>
    <name type="common">Ant piper</name>
    <dbReference type="NCBI Taxonomy" id="398741"/>
    <lineage>
        <taxon>Eukaryota</taxon>
        <taxon>Viridiplantae</taxon>
        <taxon>Streptophyta</taxon>
        <taxon>Embryophyta</taxon>
        <taxon>Tracheophyta</taxon>
        <taxon>Spermatophyta</taxon>
        <taxon>Magnoliopsida</taxon>
        <taxon>Magnoliidae</taxon>
        <taxon>Piperales</taxon>
        <taxon>Piperaceae</taxon>
        <taxon>Piper</taxon>
    </lineage>
</organism>
<name>PSBJ_PIPCE</name>
<evidence type="ECO:0000255" key="1">
    <source>
        <dbReference type="HAMAP-Rule" id="MF_01305"/>
    </source>
</evidence>
<gene>
    <name evidence="1" type="primary">psbJ</name>
</gene>
<protein>
    <recommendedName>
        <fullName evidence="1">Photosystem II reaction center protein J</fullName>
        <shortName evidence="1">PSII-J</shortName>
    </recommendedName>
</protein>
<geneLocation type="chloroplast"/>
<reference key="1">
    <citation type="journal article" date="2006" name="BMC Evol. Biol.">
        <title>Complete plastid genome sequences of Drimys, Liriodendron, and Piper: implications for the phylogenetic relationships of magnoliids.</title>
        <authorList>
            <person name="Cai Z."/>
            <person name="Penaflor C."/>
            <person name="Kuehl J.V."/>
            <person name="Leebens-Mack J."/>
            <person name="Carlson J.E."/>
            <person name="dePamphilis C.W."/>
            <person name="Boore J.L."/>
            <person name="Jansen R.K."/>
        </authorList>
    </citation>
    <scope>NUCLEOTIDE SEQUENCE [LARGE SCALE GENOMIC DNA]</scope>
</reference>
<feature type="chain" id="PRO_0000276109" description="Photosystem II reaction center protein J">
    <location>
        <begin position="1"/>
        <end position="40"/>
    </location>
</feature>
<feature type="transmembrane region" description="Helical" evidence="1">
    <location>
        <begin position="8"/>
        <end position="28"/>
    </location>
</feature>
<sequence>MADTTGRIPLWLIGTVTGIIVIGLIGIFFYGSYSGLGSSL</sequence>
<accession>Q06GP6</accession>
<keyword id="KW-0150">Chloroplast</keyword>
<keyword id="KW-0472">Membrane</keyword>
<keyword id="KW-0602">Photosynthesis</keyword>
<keyword id="KW-0604">Photosystem II</keyword>
<keyword id="KW-0934">Plastid</keyword>
<keyword id="KW-0674">Reaction center</keyword>
<keyword id="KW-0793">Thylakoid</keyword>
<keyword id="KW-0812">Transmembrane</keyword>
<keyword id="KW-1133">Transmembrane helix</keyword>